<name>SSEK1_SALTS</name>
<feature type="chain" id="PRO_0000452597" description="Protein-arginine N-acetylglucosaminyltransferase SseK1">
    <location>
        <begin position="1"/>
        <end position="336"/>
    </location>
</feature>
<feature type="short sequence motif" description="DXD motif" evidence="8">
    <location>
        <begin position="223"/>
        <end position="225"/>
    </location>
</feature>
<feature type="active site" description="Proton acceptor" evidence="9 10">
    <location>
        <position position="255"/>
    </location>
</feature>
<feature type="binding site" evidence="9 13">
    <location>
        <begin position="50"/>
        <end position="52"/>
    </location>
    <ligand>
        <name>UDP-N-acetyl-alpha-D-glucosamine</name>
        <dbReference type="ChEBI" id="CHEBI:57705"/>
    </ligand>
</feature>
<feature type="binding site" evidence="9 13">
    <location>
        <position position="74"/>
    </location>
    <ligand>
        <name>UDP-N-acetyl-alpha-D-glucosamine</name>
        <dbReference type="ChEBI" id="CHEBI:57705"/>
    </ligand>
</feature>
<feature type="binding site" evidence="9 13">
    <location>
        <begin position="224"/>
        <end position="225"/>
    </location>
    <ligand>
        <name>UDP-N-acetyl-alpha-D-glucosamine</name>
        <dbReference type="ChEBI" id="CHEBI:57705"/>
    </ligand>
</feature>
<feature type="binding site" evidence="2 13">
    <location>
        <position position="225"/>
    </location>
    <ligand>
        <name>Mn(2+)</name>
        <dbReference type="ChEBI" id="CHEBI:29035"/>
    </ligand>
</feature>
<feature type="binding site" evidence="2 13">
    <location>
        <position position="322"/>
    </location>
    <ligand>
        <name>Mn(2+)</name>
        <dbReference type="ChEBI" id="CHEBI:29035"/>
    </ligand>
</feature>
<feature type="binding site" evidence="2 13">
    <location>
        <position position="324"/>
    </location>
    <ligand>
        <name>Mn(2+)</name>
        <dbReference type="ChEBI" id="CHEBI:29035"/>
    </ligand>
</feature>
<feature type="binding site" evidence="9 13">
    <location>
        <position position="324"/>
    </location>
    <ligand>
        <name>UDP-N-acetyl-alpha-D-glucosamine</name>
        <dbReference type="ChEBI" id="CHEBI:57705"/>
    </ligand>
</feature>
<feature type="binding site" evidence="9 13">
    <location>
        <position position="329"/>
    </location>
    <ligand>
        <name>UDP-N-acetyl-alpha-D-glucosamine</name>
        <dbReference type="ChEBI" id="CHEBI:57705"/>
    </ligand>
</feature>
<feature type="glycosylation site" description="N-beta-linked (GlcNAc) arginine; by autocatalysis" evidence="5">
    <location>
        <position position="24"/>
    </location>
</feature>
<feature type="glycosylation site" description="N-beta-linked (GlcNAc) arginine; by autocatalysis" evidence="5">
    <location>
        <position position="152"/>
    </location>
</feature>
<feature type="glycosylation site" description="N-beta-linked (GlcNAc) arginine; by autocatalysis" evidence="5">
    <location>
        <position position="333"/>
    </location>
</feature>
<feature type="mutagenesis site" description="In 3RA; abolished auto-GlcNAcylation and reduced activity toward death domain-containing host target proteins; when associated with A-152 and A-333." evidence="5">
    <original>R</original>
    <variation>A</variation>
    <location>
        <position position="24"/>
    </location>
</feature>
<feature type="mutagenesis site" description="Mutant used for crystallization; prevents protein precipitation due to irregular intermolecular disulfide bonds; when associated with S-210." evidence="2">
    <original>C</original>
    <variation>S</variation>
    <location>
        <position position="39"/>
    </location>
</feature>
<feature type="mutagenesis site" description="Abolished binding to UDP-N-acetyl-alpha-D-glucosamine." evidence="2">
    <original>W</original>
    <variation>A</variation>
    <location>
        <position position="51"/>
    </location>
</feature>
<feature type="mutagenesis site" description="In 3RA; abolished auto-GlcNAcylation and reduced activity toward death domain-containing host target proteins; when associated with A-24 and A-333." evidence="5">
    <original>R</original>
    <variation>A</variation>
    <location>
        <position position="152"/>
    </location>
</feature>
<feature type="mutagenesis site" description="Reduced binding to UDP-N-acetyl-alpha-D-glucosamine." evidence="2">
    <original>F</original>
    <variation>A</variation>
    <location>
        <position position="187"/>
    </location>
</feature>
<feature type="mutagenesis site" description="Mutant used for crystallization; prevents protein precipitation due to irregular intermolecular disulfide bonds; when associated with S-39." evidence="2">
    <original>C</original>
    <variation>S</variation>
    <location>
        <position position="210"/>
    </location>
</feature>
<feature type="mutagenesis site" description="Abolished protein-arginine N-acetylglucosaminyltransferase activity." evidence="4">
    <original>DAD</original>
    <variation>AAA</variation>
    <location>
        <begin position="223"/>
        <end position="225"/>
    </location>
</feature>
<feature type="mutagenesis site" description="Abolished protein-arginine N-acetylglucosaminyltransferase activity; when associated with A-255 and 255-A-A-256." evidence="2">
    <original>H</original>
    <variation>A</variation>
    <location>
        <position position="244"/>
    </location>
</feature>
<feature type="mutagenesis site" description="Abolished protein-arginine N-acetylglucosaminyltransferase activity; when associated with A-244." evidence="2">
    <original>EN</original>
    <variation>AA</variation>
    <location>
        <begin position="255"/>
        <end position="256"/>
    </location>
</feature>
<feature type="mutagenesis site" description="Abolished protein-arginine N-acetylglucosaminyltransferase activity." evidence="4">
    <original>E</original>
    <variation>A</variation>
    <location>
        <position position="255"/>
    </location>
</feature>
<feature type="mutagenesis site" description="In 3RA; abolished auto-GlcNAcylation and reduced activity toward death domain-containing host target proteins; when associated with A-24 and A-152." evidence="5">
    <original>R</original>
    <variation>A</variation>
    <location>
        <position position="333"/>
    </location>
</feature>
<feature type="strand" evidence="15">
    <location>
        <begin position="27"/>
        <end position="31"/>
    </location>
</feature>
<feature type="strand" evidence="15">
    <location>
        <begin position="34"/>
        <end position="41"/>
    </location>
</feature>
<feature type="strand" evidence="15">
    <location>
        <begin position="47"/>
        <end position="52"/>
    </location>
</feature>
<feature type="helix" evidence="15">
    <location>
        <begin position="56"/>
        <end position="58"/>
    </location>
</feature>
<feature type="helix" evidence="15">
    <location>
        <begin position="74"/>
        <end position="84"/>
    </location>
</feature>
<feature type="strand" evidence="15">
    <location>
        <begin position="90"/>
        <end position="96"/>
    </location>
</feature>
<feature type="helix" evidence="15">
    <location>
        <begin position="100"/>
        <end position="112"/>
    </location>
</feature>
<feature type="strand" evidence="15">
    <location>
        <begin position="116"/>
        <end position="120"/>
    </location>
</feature>
<feature type="helix" evidence="15">
    <location>
        <begin position="121"/>
        <end position="123"/>
    </location>
</feature>
<feature type="helix" evidence="15">
    <location>
        <begin position="127"/>
        <end position="129"/>
    </location>
</feature>
<feature type="helix" evidence="15">
    <location>
        <begin position="133"/>
        <end position="145"/>
    </location>
</feature>
<feature type="strand" evidence="15">
    <location>
        <begin position="147"/>
        <end position="150"/>
    </location>
</feature>
<feature type="helix" evidence="15">
    <location>
        <begin position="154"/>
        <end position="165"/>
    </location>
</feature>
<feature type="helix" evidence="15">
    <location>
        <begin position="174"/>
        <end position="178"/>
    </location>
</feature>
<feature type="helix" evidence="15">
    <location>
        <begin position="185"/>
        <end position="197"/>
    </location>
</feature>
<feature type="helix" evidence="15">
    <location>
        <begin position="200"/>
        <end position="204"/>
    </location>
</feature>
<feature type="strand" evidence="15">
    <location>
        <begin position="219"/>
        <end position="222"/>
    </location>
</feature>
<feature type="strand" evidence="15">
    <location>
        <begin position="235"/>
        <end position="238"/>
    </location>
</feature>
<feature type="strand" evidence="15">
    <location>
        <begin position="241"/>
        <end position="248"/>
    </location>
</feature>
<feature type="strand" evidence="15">
    <location>
        <begin position="251"/>
        <end position="263"/>
    </location>
</feature>
<feature type="helix" evidence="15">
    <location>
        <begin position="267"/>
        <end position="278"/>
    </location>
</feature>
<feature type="turn" evidence="15">
    <location>
        <begin position="284"/>
        <end position="289"/>
    </location>
</feature>
<feature type="helix" evidence="15">
    <location>
        <begin position="290"/>
        <end position="297"/>
    </location>
</feature>
<feature type="helix" evidence="15">
    <location>
        <begin position="305"/>
        <end position="312"/>
    </location>
</feature>
<feature type="strand" evidence="15">
    <location>
        <begin position="317"/>
        <end position="320"/>
    </location>
</feature>
<dbReference type="EC" id="2.4.1.-" evidence="2 4 5 6"/>
<dbReference type="EMBL" id="FQ312003">
    <property type="protein sequence ID" value="CBW20184.1"/>
    <property type="molecule type" value="Genomic_DNA"/>
</dbReference>
<dbReference type="PDB" id="5H60">
    <property type="method" value="X-ray"/>
    <property type="resolution" value="3.64 A"/>
    <property type="chains" value="A=1-336"/>
</dbReference>
<dbReference type="PDB" id="7YM5">
    <property type="method" value="X-ray"/>
    <property type="resolution" value="3.45 A"/>
    <property type="chains" value="A=28-333"/>
</dbReference>
<dbReference type="PDB" id="7YM7">
    <property type="method" value="X-ray"/>
    <property type="resolution" value="2.20 A"/>
    <property type="chains" value="A/B=22-325"/>
</dbReference>
<dbReference type="PDBsum" id="5H60"/>
<dbReference type="PDBsum" id="7YM5"/>
<dbReference type="PDBsum" id="7YM7"/>
<dbReference type="SMR" id="A0A0H3NK84"/>
<dbReference type="GlyCosmos" id="A0A0H3NK84">
    <property type="glycosylation" value="3 sites, No reported glycans"/>
</dbReference>
<dbReference type="KEGG" id="sey:SL1344_4096"/>
<dbReference type="PATRIC" id="fig|216597.6.peg.4558"/>
<dbReference type="HOGENOM" id="CLU_081850_0_0_6"/>
<dbReference type="PHI-base" id="PHI:10430"/>
<dbReference type="PHI-base" id="PHI:10478"/>
<dbReference type="Proteomes" id="UP000008962">
    <property type="component" value="Chromosome"/>
</dbReference>
<dbReference type="GO" id="GO:0005576">
    <property type="term" value="C:extracellular region"/>
    <property type="evidence" value="ECO:0007669"/>
    <property type="project" value="UniProtKB-SubCell"/>
</dbReference>
<dbReference type="GO" id="GO:0030430">
    <property type="term" value="C:host cell cytoplasm"/>
    <property type="evidence" value="ECO:0000314"/>
    <property type="project" value="UniProtKB"/>
</dbReference>
<dbReference type="GO" id="GO:0044164">
    <property type="term" value="C:host cell cytosol"/>
    <property type="evidence" value="ECO:0007669"/>
    <property type="project" value="UniProtKB-SubCell"/>
</dbReference>
<dbReference type="GO" id="GO:0030145">
    <property type="term" value="F:manganese ion binding"/>
    <property type="evidence" value="ECO:0000314"/>
    <property type="project" value="UniProtKB"/>
</dbReference>
<dbReference type="GO" id="GO:0106362">
    <property type="term" value="F:protein-arginine N-acetylglucosaminyltransferase activity"/>
    <property type="evidence" value="ECO:0000314"/>
    <property type="project" value="UniProtKB"/>
</dbReference>
<dbReference type="GO" id="GO:0090729">
    <property type="term" value="F:toxin activity"/>
    <property type="evidence" value="ECO:0007669"/>
    <property type="project" value="UniProtKB-KW"/>
</dbReference>
<dbReference type="GO" id="GO:0033668">
    <property type="term" value="P:symbiont-mediated suppression of host apoptosis"/>
    <property type="evidence" value="ECO:0000269"/>
    <property type="project" value="SigSci"/>
</dbReference>
<dbReference type="NCBIfam" id="NF011911">
    <property type="entry name" value="PRK15384.1"/>
    <property type="match status" value="1"/>
</dbReference>
<dbReference type="Pfam" id="PF24688">
    <property type="entry name" value="SseK_NleB"/>
    <property type="match status" value="1"/>
</dbReference>
<evidence type="ECO:0000250" key="1">
    <source>
        <dbReference type="UniProtKB" id="Q9L9J3"/>
    </source>
</evidence>
<evidence type="ECO:0000269" key="2">
    <source>
    </source>
</evidence>
<evidence type="ECO:0000269" key="3">
    <source>
    </source>
</evidence>
<evidence type="ECO:0000269" key="4">
    <source>
    </source>
</evidence>
<evidence type="ECO:0000269" key="5">
    <source>
    </source>
</evidence>
<evidence type="ECO:0000269" key="6">
    <source>
    </source>
</evidence>
<evidence type="ECO:0000303" key="7">
    <source>
    </source>
</evidence>
<evidence type="ECO:0000305" key="8"/>
<evidence type="ECO:0000305" key="9">
    <source>
    </source>
</evidence>
<evidence type="ECO:0000305" key="10">
    <source>
    </source>
</evidence>
<evidence type="ECO:0000305" key="11">
    <source>
    </source>
</evidence>
<evidence type="ECO:0000312" key="12">
    <source>
        <dbReference type="EMBL" id="CBW20184.1"/>
    </source>
</evidence>
<evidence type="ECO:0007744" key="13">
    <source>
        <dbReference type="PDB" id="5H60"/>
    </source>
</evidence>
<evidence type="ECO:0007744" key="14">
    <source>
        <dbReference type="PDB" id="7YM7"/>
    </source>
</evidence>
<evidence type="ECO:0007829" key="15">
    <source>
        <dbReference type="PDB" id="7YM7"/>
    </source>
</evidence>
<gene>
    <name evidence="7" type="primary">sseK1</name>
    <name evidence="12" type="ordered locus">SL1344_4096</name>
</gene>
<protein>
    <recommendedName>
        <fullName evidence="8">Protein-arginine N-acetylglucosaminyltransferase SseK1</fullName>
        <shortName evidence="8">Arginine GlcNAcyltransferase SseK1</shortName>
        <ecNumber evidence="2 4 5 6">2.4.1.-</ecNumber>
    </recommendedName>
    <alternativeName>
        <fullName evidence="7">Salmonella secreted effector K1</fullName>
    </alternativeName>
</protein>
<proteinExistence type="evidence at protein level"/>
<reference key="1">
    <citation type="journal article" date="2012" name="Proc. Natl. Acad. Sci. U.S.A.">
        <title>The transcriptional landscape and small RNAs of Salmonella enterica serovar Typhimurium.</title>
        <authorList>
            <person name="Kroger C."/>
            <person name="Dillon S.C."/>
            <person name="Cameron A.D."/>
            <person name="Papenfort K."/>
            <person name="Sivasankaran S.K."/>
            <person name="Hokamp K."/>
            <person name="Chao Y."/>
            <person name="Sittka A."/>
            <person name="Hebrard M."/>
            <person name="Handler K."/>
            <person name="Colgan A."/>
            <person name="Leekitcharoenphon P."/>
            <person name="Langridge G.C."/>
            <person name="Lohan A.J."/>
            <person name="Loftus B."/>
            <person name="Lucchini S."/>
            <person name="Ussery D.W."/>
            <person name="Dorman C.J."/>
            <person name="Thomson N.R."/>
            <person name="Vogel J."/>
            <person name="Hinton J.C."/>
        </authorList>
    </citation>
    <scope>NUCLEOTIDE SEQUENCE [LARGE SCALE GENOMIC DNA]</scope>
    <source>
        <strain>SL1344</strain>
    </source>
</reference>
<reference key="2">
    <citation type="journal article" date="2018" name="BMB Rep.">
        <title>Structural insights showing how arginine is able to be glycosylated by pathogenic effector proteins.</title>
        <authorList>
            <person name="Park J.B."/>
            <person name="Yoo Y."/>
            <person name="Cho H.S."/>
        </authorList>
    </citation>
    <scope>DOMAIN</scope>
    <source>
        <strain>SL1344</strain>
    </source>
</reference>
<reference key="3">
    <citation type="journal article" date="2019" name="Mol. Cell. Proteomics">
        <title>Salmonella effectors SseK1 and SseK3 target death domain proteins in the TNF and TRAIL signaling pathways.</title>
        <authorList>
            <person name="Newson J.P.M."/>
            <person name="Scott N.E."/>
            <person name="Yeuk Wah Chung I."/>
            <person name="Wong Fok Lung T."/>
            <person name="Giogha C."/>
            <person name="Gan J."/>
            <person name="Wang N."/>
            <person name="Strugnell R.A."/>
            <person name="Brown N.F."/>
            <person name="Cygler M."/>
            <person name="Pearson J.S."/>
            <person name="Hartland E.L."/>
        </authorList>
    </citation>
    <scope>FUNCTION</scope>
    <scope>CATALYTIC ACTIVITY</scope>
    <scope>ACTIVE SITE</scope>
    <scope>MUTAGENESIS OF 223-ASP--ASP-225 AND GLU-255</scope>
    <source>
        <strain>SL1344</strain>
    </source>
</reference>
<reference key="4">
    <citation type="journal article" date="2020" name="Front. Cell. Infect. Microbiol.">
        <title>Auto arginine-GlcNAcylation is crucial for bacterial pathogens in regulating host cell death.</title>
        <authorList>
            <person name="Xue J."/>
            <person name="Pan X."/>
            <person name="Peng T."/>
            <person name="Duan M."/>
            <person name="Du L."/>
            <person name="Zhuang X."/>
            <person name="Cai X."/>
            <person name="Yi X."/>
            <person name="Fu Y."/>
            <person name="Li S."/>
        </authorList>
    </citation>
    <scope>FUNCTION</scope>
    <scope>CATALYTIC ACTIVITY</scope>
    <scope>SUBCELLULAR LOCATION</scope>
    <scope>AUTOGLYCOSYLATION</scope>
    <scope>GLYCOSYLATION AT ARG-24; ARG-152 AND ARG-333</scope>
    <scope>MUTAGENESIS OF ARG-24; ARG-152 AND ARG-333</scope>
    <source>
        <strain>SL1344</strain>
    </source>
</reference>
<reference key="5">
    <citation type="journal article" date="2020" name="Front. Cell Dev. Biol.">
        <title>Arg-GlcNAcylation on TRADD by NleB and SseK1 is crucial for bacterial pathogenesis.</title>
        <authorList>
            <person name="Xue J."/>
            <person name="Hu S."/>
            <person name="Huang Y."/>
            <person name="Zhang Q."/>
            <person name="Yi X."/>
            <person name="Pan X."/>
            <person name="Li S."/>
        </authorList>
    </citation>
    <scope>FUNCTION</scope>
    <scope>CATALYTIC ACTIVITY</scope>
    <source>
        <strain>SL1344</strain>
    </source>
</reference>
<reference evidence="13 14" key="6">
    <citation type="journal article" date="2018" name="Nat. Commun.">
        <title>Structural basis for arginine glycosylation of host substrates by bacterial effector proteins.</title>
        <authorList>
            <person name="Park J.B."/>
            <person name="Kim Y.H."/>
            <person name="Yoo Y."/>
            <person name="Kim J."/>
            <person name="Jun S.H."/>
            <person name="Cho J.W."/>
            <person name="El Qaidi S."/>
            <person name="Walpole S."/>
            <person name="Monaco S."/>
            <person name="Garcia-Garcia A.A."/>
            <person name="Wu M."/>
            <person name="Hays M.P."/>
            <person name="Hurtado-Guerrero R."/>
            <person name="Angulo J."/>
            <person name="Hardwidge P.R."/>
            <person name="Shin J.S."/>
            <person name="Cho H.S."/>
        </authorList>
    </citation>
    <scope>X-RAY CRYSTALLOGRAPHY (3.64 ANGSTROMS) OF MUTANT SER-39/SER-210 IN COMPLEX WITH URIDINE-5'-DIPHOSPHATE AND MANGANESE</scope>
    <scope>FUNCTION</scope>
    <scope>CATALYTIC ACTIVITY</scope>
    <scope>COFACTOR</scope>
    <scope>DOMAIN</scope>
    <scope>ACTIVE SITE</scope>
    <scope>MUTAGENESIS OF CYS-39; TRP-51; PHE-187; CYS-210; HIS-244 AND 255-GLU-ASN-256</scope>
    <source>
        <strain>SL1344</strain>
    </source>
</reference>
<organism>
    <name type="scientific">Salmonella typhimurium (strain SL1344)</name>
    <dbReference type="NCBI Taxonomy" id="216597"/>
    <lineage>
        <taxon>Bacteria</taxon>
        <taxon>Pseudomonadati</taxon>
        <taxon>Pseudomonadota</taxon>
        <taxon>Gammaproteobacteria</taxon>
        <taxon>Enterobacterales</taxon>
        <taxon>Enterobacteriaceae</taxon>
        <taxon>Salmonella</taxon>
    </lineage>
</organism>
<sequence>MIPPLNRYVPALSKNELVKTVTNRDIQFTSFNGKDYPLCFLDEKTPLLFQWFERNPARFGKNDIPIINTEKNPYLNNIIKAATIEKERLIGIFVDGDFFPGQKDAFSKLEYDYENIKVIYRNDIDFSMYDKKLSEIYMENISKQESMPEEKRDCHLLQLLKKELSDIQEGNDSLIKSYLLDKGHGWFDFYRNMAMLKAGQLFLEADKVGCYDLSTNSGCIYLDADMIITEKLGGIYIPDGIAVHVERIDGRASMENGIIAVDRNNHPALLAGLEIMHTKFDADPYSDGVCNGIRKHFNYSLNEDYNSFCDFIEFKHDNIIMNTSQFTQSSWARHVQ</sequence>
<accession>A0A0H3NK84</accession>
<comment type="function">
    <text evidence="1 2 4 5 6">Protein-arginine N-acetylglucosaminyltransferase effector that disrupts TNF signaling in infected cells, including NF-kappa-B signaling, apoptosis and necroptosis (PubMed:30327479, PubMed:32766249). Acts by catalyzing the transfer of a single N-acetylglucosamine (GlcNAc) to a conserved arginine residue in the death domain of host proteins TRADD and, to a lower extent, FADD: arginine GlcNAcylation prevents homotypic/heterotypic death domain interactions and assembly of the oligomeric TNF-alpha receptor complex, thereby disrupting TNF signaling (PubMed:30327479, PubMed:30902834, PubMed:32766249). Also acts on host proteins without a death domain: catalyzes arginine GlcNAcylation of host GAPDH protein, thereby preventing GAPDH interaction with TRAF2, leading to inhibit NF-kappa-B signaling (By similarity). Catalyzes GlcNAcylation of host tubulin-folding cofactor TBCB, thereby promoting microtubule stability (By similarity). Also mediates auto-GlcNAcylation, which is required for activity toward death domain-containing host target proteins (PubMed:32432056).</text>
</comment>
<comment type="catalytic activity">
    <reaction evidence="2 4 5 6">
        <text>L-arginyl-[protein] + UDP-N-acetyl-alpha-D-glucosamine = N(omega)-(N-acetyl-beta-D-glucosaminyl)-L-arginyl-[protein] + UDP + H(+)</text>
        <dbReference type="Rhea" id="RHEA:66632"/>
        <dbReference type="Rhea" id="RHEA-COMP:10532"/>
        <dbReference type="Rhea" id="RHEA-COMP:17079"/>
        <dbReference type="ChEBI" id="CHEBI:15378"/>
        <dbReference type="ChEBI" id="CHEBI:29965"/>
        <dbReference type="ChEBI" id="CHEBI:57705"/>
        <dbReference type="ChEBI" id="CHEBI:58223"/>
        <dbReference type="ChEBI" id="CHEBI:167322"/>
    </reaction>
    <physiologicalReaction direction="left-to-right" evidence="2 4 5 6">
        <dbReference type="Rhea" id="RHEA:66633"/>
    </physiologicalReaction>
</comment>
<comment type="cofactor">
    <cofactor evidence="2">
        <name>Mn(2+)</name>
        <dbReference type="ChEBI" id="CHEBI:29035"/>
    </cofactor>
</comment>
<comment type="activity regulation">
    <text evidence="1">Protein-arginine N-acetylglucosaminyltransferase activity is inhibited by 100066N compound (flavone analog) and 102644N compound (a substituted isoxazole).</text>
</comment>
<comment type="subcellular location">
    <subcellularLocation>
        <location evidence="1">Secreted</location>
    </subcellularLocation>
    <subcellularLocation>
        <location evidence="11">Host cytoplasm</location>
        <location evidence="11">Host cytosol</location>
    </subcellularLocation>
    <text evidence="1">Secreted via type III secretion systems 1 and 2 (SPI-1 and SPI-2 T3SS).</text>
</comment>
<comment type="domain">
    <text evidence="2 3">Adopts a GT-A fold and acts as an inverting enzyme that converts the alpha-configuration in the UDP-N-acetyl-alpha-D-glucosamine donor to the beta configuration in the N-linked (GlcNAc) arginine product.</text>
</comment>
<comment type="PTM">
    <text evidence="5">Auto-glycosylated: arginine GlcNAcylation is required for activity toward death domain-containing host target proteins.</text>
</comment>
<comment type="similarity">
    <text evidence="8">Belongs to the glycosyltransferase NleB family.</text>
</comment>
<keyword id="KW-0002">3D-structure</keyword>
<keyword id="KW-0325">Glycoprotein</keyword>
<keyword id="KW-0328">Glycosyltransferase</keyword>
<keyword id="KW-1035">Host cytoplasm</keyword>
<keyword id="KW-0464">Manganese</keyword>
<keyword id="KW-0479">Metal-binding</keyword>
<keyword id="KW-0964">Secreted</keyword>
<keyword id="KW-0800">Toxin</keyword>
<keyword id="KW-0808">Transferase</keyword>
<keyword id="KW-0843">Virulence</keyword>